<protein>
    <recommendedName>
        <fullName evidence="2">Kelch domain-containing protein 2</fullName>
    </recommendedName>
</protein>
<dbReference type="EMBL" id="BT021013">
    <property type="protein sequence ID" value="AAX09030.1"/>
    <property type="molecule type" value="mRNA"/>
</dbReference>
<dbReference type="EMBL" id="BC109981">
    <property type="protein sequence ID" value="AAI09982.1"/>
    <property type="molecule type" value="mRNA"/>
</dbReference>
<dbReference type="RefSeq" id="NP_001014948.1">
    <property type="nucleotide sequence ID" value="NM_001014948.3"/>
</dbReference>
<dbReference type="SMR" id="Q5E9A7"/>
<dbReference type="FunCoup" id="Q5E9A7">
    <property type="interactions" value="2024"/>
</dbReference>
<dbReference type="STRING" id="9913.ENSBTAP00000006490"/>
<dbReference type="PaxDb" id="9913-ENSBTAP00000006490"/>
<dbReference type="Ensembl" id="ENSBTAT00000006490.5">
    <property type="protein sequence ID" value="ENSBTAP00000006490.3"/>
    <property type="gene ID" value="ENSBTAG00000004933.5"/>
</dbReference>
<dbReference type="GeneID" id="535436"/>
<dbReference type="KEGG" id="bta:535436"/>
<dbReference type="CTD" id="23588"/>
<dbReference type="VEuPathDB" id="HostDB:ENSBTAG00000004933"/>
<dbReference type="VGNC" id="VGNC:30635">
    <property type="gene designation" value="KLHDC2"/>
</dbReference>
<dbReference type="eggNOG" id="KOG0379">
    <property type="taxonomic scope" value="Eukaryota"/>
</dbReference>
<dbReference type="GeneTree" id="ENSGT00940000157150"/>
<dbReference type="HOGENOM" id="CLU_042804_0_0_1"/>
<dbReference type="InParanoid" id="Q5E9A7"/>
<dbReference type="OMA" id="MGKLLQF"/>
<dbReference type="OrthoDB" id="10251809at2759"/>
<dbReference type="TreeFam" id="TF314081"/>
<dbReference type="UniPathway" id="UPA00143"/>
<dbReference type="Proteomes" id="UP000009136">
    <property type="component" value="Chromosome 10"/>
</dbReference>
<dbReference type="Bgee" id="ENSBTAG00000004933">
    <property type="expression patterns" value="Expressed in spermatocyte and 106 other cell types or tissues"/>
</dbReference>
<dbReference type="GO" id="GO:0031462">
    <property type="term" value="C:Cul2-RING ubiquitin ligase complex"/>
    <property type="evidence" value="ECO:0000250"/>
    <property type="project" value="UniProtKB"/>
</dbReference>
<dbReference type="GO" id="GO:0016604">
    <property type="term" value="C:nuclear body"/>
    <property type="evidence" value="ECO:0007669"/>
    <property type="project" value="Ensembl"/>
</dbReference>
<dbReference type="GO" id="GO:0031965">
    <property type="term" value="C:nuclear membrane"/>
    <property type="evidence" value="ECO:0007669"/>
    <property type="project" value="Ensembl"/>
</dbReference>
<dbReference type="GO" id="GO:0005634">
    <property type="term" value="C:nucleus"/>
    <property type="evidence" value="ECO:0000250"/>
    <property type="project" value="UniProtKB"/>
</dbReference>
<dbReference type="GO" id="GO:1990756">
    <property type="term" value="F:ubiquitin-like ligase-substrate adaptor activity"/>
    <property type="evidence" value="ECO:0000250"/>
    <property type="project" value="UniProtKB"/>
</dbReference>
<dbReference type="GO" id="GO:0043161">
    <property type="term" value="P:proteasome-mediated ubiquitin-dependent protein catabolic process"/>
    <property type="evidence" value="ECO:0000250"/>
    <property type="project" value="UniProtKB"/>
</dbReference>
<dbReference type="GO" id="GO:0016567">
    <property type="term" value="P:protein ubiquitination"/>
    <property type="evidence" value="ECO:0007669"/>
    <property type="project" value="UniProtKB-UniPathway"/>
</dbReference>
<dbReference type="GO" id="GO:0140627">
    <property type="term" value="P:ubiquitin-dependent protein catabolic process via the C-end degron rule pathway"/>
    <property type="evidence" value="ECO:0000250"/>
    <property type="project" value="UniProtKB"/>
</dbReference>
<dbReference type="FunFam" id="2.120.10.80:FF:000012">
    <property type="entry name" value="Kelch domain-containing protein 2"/>
    <property type="match status" value="1"/>
</dbReference>
<dbReference type="FunFam" id="2.120.10.80:FF:000043">
    <property type="entry name" value="Kelch domain-containing protein 2"/>
    <property type="match status" value="1"/>
</dbReference>
<dbReference type="Gene3D" id="2.120.10.80">
    <property type="entry name" value="Kelch-type beta propeller"/>
    <property type="match status" value="2"/>
</dbReference>
<dbReference type="InterPro" id="IPR015915">
    <property type="entry name" value="Kelch-typ_b-propeller"/>
</dbReference>
<dbReference type="PANTHER" id="PTHR46228">
    <property type="entry name" value="KELCH DOMAIN-CONTAINING PROTEIN"/>
    <property type="match status" value="1"/>
</dbReference>
<dbReference type="PANTHER" id="PTHR46228:SF3">
    <property type="entry name" value="KELCH DOMAIN-CONTAINING PROTEIN 2"/>
    <property type="match status" value="1"/>
</dbReference>
<dbReference type="Pfam" id="PF24681">
    <property type="entry name" value="Kelch_KLHDC2_KLHL20_DRC7"/>
    <property type="match status" value="1"/>
</dbReference>
<dbReference type="SUPFAM" id="SSF117281">
    <property type="entry name" value="Kelch motif"/>
    <property type="match status" value="2"/>
</dbReference>
<sequence>MADGYEDLREDELPGPAYEGYESAELACPAERSGHVAVSDGRHMFVWGGYKSNQVRGLYDFYLPREELWIYNMETGRWKKINTEGDVPPSMSGSCAVCVDRVLYLFGGHHSRGNTNKFYMLDSRSTDRVLHWERIDCQGVPPSSKDKLGVWVYKNKLIFFGGYGYLPEDKVLGTFEFDETSFWNSSHPRGWNDHVHILDTETFIWSQPITTGKPPSPRAAHACATVGNKGFVFGGRYRDARMNDLHYLNLDTWEWNELIPQGICPVGRSWHSLTPVSSDHLFLFGGFTTDKQPLSDAWTYCISKNEWIKFNHPHTEKPRLWHTACASDEGEVIVFGGCANNLLVHHRAAHSNEILIFSVQPKSLVRLSLEAVICFKEMLANSWNCLPKHLLHSVNQRFGSNNTSGS</sequence>
<organism>
    <name type="scientific">Bos taurus</name>
    <name type="common">Bovine</name>
    <dbReference type="NCBI Taxonomy" id="9913"/>
    <lineage>
        <taxon>Eukaryota</taxon>
        <taxon>Metazoa</taxon>
        <taxon>Chordata</taxon>
        <taxon>Craniata</taxon>
        <taxon>Vertebrata</taxon>
        <taxon>Euteleostomi</taxon>
        <taxon>Mammalia</taxon>
        <taxon>Eutheria</taxon>
        <taxon>Laurasiatheria</taxon>
        <taxon>Artiodactyla</taxon>
        <taxon>Ruminantia</taxon>
        <taxon>Pecora</taxon>
        <taxon>Bovidae</taxon>
        <taxon>Bovinae</taxon>
        <taxon>Bos</taxon>
    </lineage>
</organism>
<proteinExistence type="evidence at transcript level"/>
<evidence type="ECO:0000250" key="1">
    <source>
        <dbReference type="UniProtKB" id="Q9Y2U9"/>
    </source>
</evidence>
<evidence type="ECO:0000305" key="2"/>
<keyword id="KW-0880">Kelch repeat</keyword>
<keyword id="KW-0539">Nucleus</keyword>
<keyword id="KW-1185">Reference proteome</keyword>
<keyword id="KW-0677">Repeat</keyword>
<keyword id="KW-0832">Ubl conjugation</keyword>
<keyword id="KW-0833">Ubl conjugation pathway</keyword>
<feature type="chain" id="PRO_0000237573" description="Kelch domain-containing protein 2">
    <location>
        <begin position="1"/>
        <end position="406"/>
    </location>
</feature>
<feature type="repeat" description="Kelch 1" evidence="1">
    <location>
        <begin position="31"/>
        <end position="85"/>
    </location>
</feature>
<feature type="repeat" description="Kelch 2" evidence="1">
    <location>
        <begin position="92"/>
        <end position="136"/>
    </location>
</feature>
<feature type="repeat" description="Kelch 3" evidence="1">
    <location>
        <begin position="148"/>
        <end position="207"/>
    </location>
</feature>
<feature type="repeat" description="Kelch 4" evidence="1">
    <location>
        <begin position="221"/>
        <end position="259"/>
    </location>
</feature>
<feature type="repeat" description="Kelch 5" evidence="1">
    <location>
        <begin position="271"/>
        <end position="311"/>
    </location>
</feature>
<feature type="repeat" description="Kelch 6" evidence="1">
    <location>
        <begin position="322"/>
        <end position="359"/>
    </location>
</feature>
<accession>Q5E9A7</accession>
<comment type="function">
    <text evidence="1">Substrate-recognition component of a Cul2-RING (CRL2) E3 ubiquitin-protein ligase complex of the DesCEND (destruction via C-end degrons) pathway, which recognizes a C-degron located at the extreme C terminus of target proteins, leading to their ubiquitination and degradation (By similarity). The C-degron recognized by the DesCEND pathway is usually a motif of less than ten residues and can be present in full-length proteins, truncated proteins or proteolytically cleaved forms (By similarity). The CRL2(KLHDC2) complex specifically recognizes proteins with a diglycine (Gly-Gly) at the C-terminus, leading to their ubiquitination and degradation (By similarity). The CRL2(KLHDC2) complex mediates ubiquitination and degradation of truncated SELENOK and SELENOS selenoproteins produced by failed UGA/Sec decoding, which end with a diglycine (By similarity). The CRL2(KLHDC2) complex also recognizes proteolytically cleaved proteins ending with Gly-Gly, such as the N-terminal fragment of USP1, leading to their degradation (By similarity). May also act as an indirect repressor of CREB3-mediated transcription by interfering with CREB3-DNA-binding (By similarity).</text>
</comment>
<comment type="pathway">
    <text evidence="1">Protein modification; protein ubiquitination.</text>
</comment>
<comment type="subunit">
    <text evidence="1">Component of a CRL2(KLHDC2) E3 ubiquitin-protein ligase complex, also named ECS(KLHDC2) complex, composed of CUL2, Elongin BC (ELOB and ELOC), RBX1 and substrate-specific adapter KLHDC2 (By similarity). May form oligomers as a KLHDC2-ELOB-ELOC complex; this interaction is autoinhibitory for the E3 ligase complex as the substrate-binding site of KLHDC2 is blocked in the oligomer (By similarity). Interacts with CREB3; interaction is direct and specific as it does not interact with CREB1, ATF4, ATF6, JUN, FOS, CEBPA or herpes simplex virus transactivator VP16 (By similarity).</text>
</comment>
<comment type="subcellular location">
    <subcellularLocation>
        <location evidence="1">Nucleus</location>
    </subcellularLocation>
</comment>
<comment type="PTM">
    <text evidence="1">Autoubiquitinated by the CRL2(KLHDC2) E3 ligase complex.</text>
</comment>
<name>KLDC2_BOVIN</name>
<reference key="1">
    <citation type="journal article" date="2005" name="BMC Genomics">
        <title>Characterization of 954 bovine full-CDS cDNA sequences.</title>
        <authorList>
            <person name="Harhay G.P."/>
            <person name="Sonstegard T.S."/>
            <person name="Keele J.W."/>
            <person name="Heaton M.P."/>
            <person name="Clawson M.L."/>
            <person name="Snelling W.M."/>
            <person name="Wiedmann R.T."/>
            <person name="Van Tassell C.P."/>
            <person name="Smith T.P.L."/>
        </authorList>
    </citation>
    <scope>NUCLEOTIDE SEQUENCE [LARGE SCALE MRNA]</scope>
</reference>
<reference key="2">
    <citation type="submission" date="2005-11" db="EMBL/GenBank/DDBJ databases">
        <authorList>
            <consortium name="NIH - Mammalian Gene Collection (MGC) project"/>
        </authorList>
    </citation>
    <scope>NUCLEOTIDE SEQUENCE [LARGE SCALE MRNA]</scope>
    <source>
        <strain>Crossbred X Angus</strain>
        <tissue>Liver</tissue>
    </source>
</reference>
<gene>
    <name evidence="1" type="primary">KLHDC2</name>
</gene>